<protein>
    <recommendedName>
        <fullName>Spermatogenesis-associated protein 21</fullName>
    </recommendedName>
</protein>
<evidence type="ECO:0000250" key="1"/>
<evidence type="ECO:0000255" key="2"/>
<evidence type="ECO:0000255" key="3">
    <source>
        <dbReference type="PROSITE-ProRule" id="PRU00448"/>
    </source>
</evidence>
<evidence type="ECO:0000256" key="4">
    <source>
        <dbReference type="SAM" id="MobiDB-lite"/>
    </source>
</evidence>
<dbReference type="EMBL" id="AB168993">
    <property type="protein sequence ID" value="BAE01088.1"/>
    <property type="molecule type" value="mRNA"/>
</dbReference>
<dbReference type="RefSeq" id="NP_001272246.1">
    <property type="nucleotide sequence ID" value="NM_001285317.1"/>
</dbReference>
<dbReference type="STRING" id="9541.ENSMFAP00000007278"/>
<dbReference type="eggNOG" id="KOG0027">
    <property type="taxonomic scope" value="Eukaryota"/>
</dbReference>
<dbReference type="Proteomes" id="UP000233100">
    <property type="component" value="Unplaced"/>
</dbReference>
<dbReference type="GO" id="GO:0005509">
    <property type="term" value="F:calcium ion binding"/>
    <property type="evidence" value="ECO:0007669"/>
    <property type="project" value="InterPro"/>
</dbReference>
<dbReference type="CDD" id="cd00051">
    <property type="entry name" value="EFh"/>
    <property type="match status" value="1"/>
</dbReference>
<dbReference type="Gene3D" id="1.10.238.10">
    <property type="entry name" value="EF-hand"/>
    <property type="match status" value="1"/>
</dbReference>
<dbReference type="InterPro" id="IPR011992">
    <property type="entry name" value="EF-hand-dom_pair"/>
</dbReference>
<dbReference type="InterPro" id="IPR018247">
    <property type="entry name" value="EF_Hand_1_Ca_BS"/>
</dbReference>
<dbReference type="InterPro" id="IPR002048">
    <property type="entry name" value="EF_hand_dom"/>
</dbReference>
<dbReference type="InterPro" id="IPR043520">
    <property type="entry name" value="SPT21"/>
</dbReference>
<dbReference type="PANTHER" id="PTHR47500">
    <property type="entry name" value="EF-HAND CALCIUM-BINDING DOMAIN-CONTAINING PROTEIN"/>
    <property type="match status" value="1"/>
</dbReference>
<dbReference type="PANTHER" id="PTHR47500:SF1">
    <property type="entry name" value="SPERMATOGENESIS-ASSOCIATED PROTEIN 21"/>
    <property type="match status" value="1"/>
</dbReference>
<dbReference type="SMART" id="SM00054">
    <property type="entry name" value="EFh"/>
    <property type="match status" value="1"/>
</dbReference>
<dbReference type="SUPFAM" id="SSF47473">
    <property type="entry name" value="EF-hand"/>
    <property type="match status" value="1"/>
</dbReference>
<dbReference type="PROSITE" id="PS00018">
    <property type="entry name" value="EF_HAND_1"/>
    <property type="match status" value="1"/>
</dbReference>
<dbReference type="PROSITE" id="PS50222">
    <property type="entry name" value="EF_HAND_2"/>
    <property type="match status" value="1"/>
</dbReference>
<name>SPT21_MACFA</name>
<feature type="chain" id="PRO_0000330687" description="Spermatogenesis-associated protein 21">
    <location>
        <begin position="1"/>
        <end position="696"/>
    </location>
</feature>
<feature type="domain" description="EF-hand" evidence="3">
    <location>
        <begin position="481"/>
        <end position="516"/>
    </location>
</feature>
<feature type="region of interest" description="Disordered" evidence="4">
    <location>
        <begin position="1"/>
        <end position="301"/>
    </location>
</feature>
<feature type="region of interest" description="Disordered" evidence="4">
    <location>
        <begin position="329"/>
        <end position="386"/>
    </location>
</feature>
<feature type="region of interest" description="Disordered" evidence="4">
    <location>
        <begin position="646"/>
        <end position="696"/>
    </location>
</feature>
<feature type="coiled-coil region" evidence="2">
    <location>
        <begin position="424"/>
        <end position="451"/>
    </location>
</feature>
<feature type="compositionally biased region" description="Basic and acidic residues" evidence="4">
    <location>
        <begin position="67"/>
        <end position="86"/>
    </location>
</feature>
<feature type="compositionally biased region" description="Polar residues" evidence="4">
    <location>
        <begin position="96"/>
        <end position="116"/>
    </location>
</feature>
<feature type="compositionally biased region" description="Basic and acidic residues" evidence="4">
    <location>
        <begin position="195"/>
        <end position="209"/>
    </location>
</feature>
<feature type="compositionally biased region" description="Polar residues" evidence="4">
    <location>
        <begin position="223"/>
        <end position="235"/>
    </location>
</feature>
<feature type="compositionally biased region" description="Basic and acidic residues" evidence="4">
    <location>
        <begin position="275"/>
        <end position="287"/>
    </location>
</feature>
<feature type="compositionally biased region" description="Low complexity" evidence="4">
    <location>
        <begin position="288"/>
        <end position="297"/>
    </location>
</feature>
<feature type="compositionally biased region" description="Low complexity" evidence="4">
    <location>
        <begin position="339"/>
        <end position="366"/>
    </location>
</feature>
<feature type="compositionally biased region" description="Basic and acidic residues" evidence="4">
    <location>
        <begin position="676"/>
        <end position="686"/>
    </location>
</feature>
<feature type="binding site" evidence="3">
    <location>
        <position position="494"/>
    </location>
    <ligand>
        <name>Ca(2+)</name>
        <dbReference type="ChEBI" id="CHEBI:29108"/>
    </ligand>
</feature>
<feature type="binding site" evidence="3">
    <location>
        <position position="496"/>
    </location>
    <ligand>
        <name>Ca(2+)</name>
        <dbReference type="ChEBI" id="CHEBI:29108"/>
    </ligand>
</feature>
<feature type="binding site" evidence="3">
    <location>
        <position position="498"/>
    </location>
    <ligand>
        <name>Ca(2+)</name>
        <dbReference type="ChEBI" id="CHEBI:29108"/>
    </ligand>
</feature>
<feature type="binding site" evidence="3">
    <location>
        <position position="500"/>
    </location>
    <ligand>
        <name>Ca(2+)</name>
        <dbReference type="ChEBI" id="CHEBI:29108"/>
    </ligand>
</feature>
<feature type="binding site" evidence="3">
    <location>
        <position position="505"/>
    </location>
    <ligand>
        <name>Ca(2+)</name>
        <dbReference type="ChEBI" id="CHEBI:29108"/>
    </ligand>
</feature>
<accession>Q4R736</accession>
<keyword id="KW-0106">Calcium</keyword>
<keyword id="KW-0175">Coiled coil</keyword>
<keyword id="KW-0479">Metal-binding</keyword>
<keyword id="KW-1185">Reference proteome</keyword>
<organism>
    <name type="scientific">Macaca fascicularis</name>
    <name type="common">Crab-eating macaque</name>
    <name type="synonym">Cynomolgus monkey</name>
    <dbReference type="NCBI Taxonomy" id="9541"/>
    <lineage>
        <taxon>Eukaryota</taxon>
        <taxon>Metazoa</taxon>
        <taxon>Chordata</taxon>
        <taxon>Craniata</taxon>
        <taxon>Vertebrata</taxon>
        <taxon>Euteleostomi</taxon>
        <taxon>Mammalia</taxon>
        <taxon>Eutheria</taxon>
        <taxon>Euarchontoglires</taxon>
        <taxon>Primates</taxon>
        <taxon>Haplorrhini</taxon>
        <taxon>Catarrhini</taxon>
        <taxon>Cercopithecidae</taxon>
        <taxon>Cercopithecinae</taxon>
        <taxon>Macaca</taxon>
    </lineage>
</organism>
<proteinExistence type="evidence at transcript level"/>
<gene>
    <name type="primary">SPATA21</name>
    <name type="synonym">QtsA-16425</name>
</gene>
<reference key="1">
    <citation type="submission" date="2005-06" db="EMBL/GenBank/DDBJ databases">
        <title>DNA sequences of macaque genes expressed in brain or testis and its evolutionary implications.</title>
        <authorList>
            <consortium name="International consortium for macaque cDNA sequencing and analysis"/>
        </authorList>
    </citation>
    <scope>NUCLEOTIDE SEQUENCE [LARGE SCALE MRNA]</scope>
    <source>
        <tissue>Testis</tissue>
    </source>
</reference>
<comment type="function">
    <text evidence="1">Involved in the differentiation of haploid spermatids.</text>
</comment>
<sequence length="696" mass="76512">MDNRNTQMYTEGRIKVPGTQPSPGLRITIKRAGVEPTIPGVSQVMFPDASEVGSRKQLSSASGGPEKGPRYRDTFKEGPSELRTQEQRPPAKPGKKQSSWVPQEGSQELQAGQDQSELGLLPSWVPEGPEGLQQLGSGKEIEGQQRRQRNRGTGEDEPPESCQGPGYQSTLGHQADVVQPAEPCCPLAGRGQPLGDKRPKEADVPHIRPQEAPPEPSPGAHGDSSQEAMPPTSTVAPEEKTASSFLPSMPGPTKTKGGGEAVETQPAPGPLPPPEVRDIGERREPDRVQQQPQKPVVAAGTQNLRKFRQGFMKCLLEMEKVEASHRRALKARSLTAQKSPRTLTPVPTSSPSLPQTPASAPASGPSWARLSAPGPEPAPVGASVPTSTPCPVLLCPALDLGWRRMELSHHSSERTLSYAKARQEPEEQSLQKLYQNREKSEEQLTLKQEEAFRSYFEIFNGPGEVDAQSLKNILLLMGFSVTPAQVEDALMSADVNGDGHVDFKDFLAVMTDTRRFFCSVEQNALTDMAPHNPHTLLFEILPLLVEMLALPEAVLEEITNYYQKKLKAGTCKAQEMEAAIGRLRLQKQLPYNPQQEESSEVPERKVLSILSRLKQQNYAPNLQSPYAQVPCIPLCPRMDKKMVRRKPTNHYVQDQCTTPGLAPDIRSPFFQSRSQGNREHNSDSRKWPSSVPSRTH</sequence>